<reference key="1">
    <citation type="journal article" date="2006" name="Genome Res.">
        <title>Massive genome erosion and functional adaptations provide insights into the symbiotic lifestyle of Sodalis glossinidius in the tsetse host.</title>
        <authorList>
            <person name="Toh H."/>
            <person name="Weiss B.L."/>
            <person name="Perkin S.A.H."/>
            <person name="Yamashita A."/>
            <person name="Oshima K."/>
            <person name="Hattori M."/>
            <person name="Aksoy S."/>
        </authorList>
    </citation>
    <scope>NUCLEOTIDE SEQUENCE [LARGE SCALE GENOMIC DNA]</scope>
    <source>
        <strain>morsitans</strain>
    </source>
</reference>
<name>BAMA_SODGM</name>
<dbReference type="EMBL" id="AP008232">
    <property type="protein sequence ID" value="BAE75210.1"/>
    <property type="molecule type" value="Genomic_DNA"/>
</dbReference>
<dbReference type="RefSeq" id="WP_011411666.1">
    <property type="nucleotide sequence ID" value="NC_007712.1"/>
</dbReference>
<dbReference type="SMR" id="Q2NRL5"/>
<dbReference type="STRING" id="343509.SG1935"/>
<dbReference type="KEGG" id="sgl:SG1935"/>
<dbReference type="eggNOG" id="COG4775">
    <property type="taxonomic scope" value="Bacteria"/>
</dbReference>
<dbReference type="HOGENOM" id="CLU_007664_1_0_6"/>
<dbReference type="OrthoDB" id="9803054at2"/>
<dbReference type="BioCyc" id="SGLO343509:SGP1_RS17800-MONOMER"/>
<dbReference type="Proteomes" id="UP000001932">
    <property type="component" value="Chromosome"/>
</dbReference>
<dbReference type="GO" id="GO:1990063">
    <property type="term" value="C:Bam protein complex"/>
    <property type="evidence" value="ECO:0007669"/>
    <property type="project" value="TreeGrafter"/>
</dbReference>
<dbReference type="GO" id="GO:0043165">
    <property type="term" value="P:Gram-negative-bacterium-type cell outer membrane assembly"/>
    <property type="evidence" value="ECO:0007669"/>
    <property type="project" value="UniProtKB-UniRule"/>
</dbReference>
<dbReference type="GO" id="GO:0051205">
    <property type="term" value="P:protein insertion into membrane"/>
    <property type="evidence" value="ECO:0007669"/>
    <property type="project" value="UniProtKB-UniRule"/>
</dbReference>
<dbReference type="FunFam" id="2.40.160.50:FF:000001">
    <property type="entry name" value="Outer membrane protein assembly factor BamA"/>
    <property type="match status" value="1"/>
</dbReference>
<dbReference type="FunFam" id="3.10.20.310:FF:000001">
    <property type="entry name" value="Outer membrane protein assembly factor BamA"/>
    <property type="match status" value="1"/>
</dbReference>
<dbReference type="FunFam" id="3.10.20.310:FF:000002">
    <property type="entry name" value="Outer membrane protein assembly factor BamA"/>
    <property type="match status" value="1"/>
</dbReference>
<dbReference type="FunFam" id="3.10.20.310:FF:000003">
    <property type="entry name" value="Outer membrane protein assembly factor BamA"/>
    <property type="match status" value="1"/>
</dbReference>
<dbReference type="FunFam" id="3.10.20.310:FF:000004">
    <property type="entry name" value="Outer membrane protein assembly factor BamA"/>
    <property type="match status" value="1"/>
</dbReference>
<dbReference type="FunFam" id="3.10.20.310:FF:000005">
    <property type="entry name" value="Outer membrane protein assembly factor BamA"/>
    <property type="match status" value="1"/>
</dbReference>
<dbReference type="Gene3D" id="3.10.20.310">
    <property type="entry name" value="membrane protein fhac"/>
    <property type="match status" value="5"/>
</dbReference>
<dbReference type="Gene3D" id="2.40.160.50">
    <property type="entry name" value="membrane protein fhac: a member of the omp85/tpsb transporter family"/>
    <property type="match status" value="1"/>
</dbReference>
<dbReference type="HAMAP" id="MF_01430">
    <property type="entry name" value="OM_assembly_BamA"/>
    <property type="match status" value="1"/>
</dbReference>
<dbReference type="InterPro" id="IPR000184">
    <property type="entry name" value="Bac_surfAg_D15"/>
</dbReference>
<dbReference type="InterPro" id="IPR010827">
    <property type="entry name" value="BamA/TamA_POTRA"/>
</dbReference>
<dbReference type="InterPro" id="IPR039910">
    <property type="entry name" value="D15-like"/>
</dbReference>
<dbReference type="InterPro" id="IPR023707">
    <property type="entry name" value="OM_assembly_BamA"/>
</dbReference>
<dbReference type="InterPro" id="IPR034746">
    <property type="entry name" value="POTRA"/>
</dbReference>
<dbReference type="NCBIfam" id="TIGR03303">
    <property type="entry name" value="OM_YaeT"/>
    <property type="match status" value="1"/>
</dbReference>
<dbReference type="NCBIfam" id="NF008287">
    <property type="entry name" value="PRK11067.1"/>
    <property type="match status" value="1"/>
</dbReference>
<dbReference type="PANTHER" id="PTHR12815:SF23">
    <property type="entry name" value="OUTER MEMBRANE PROTEIN ASSEMBLY FACTOR BAMA"/>
    <property type="match status" value="1"/>
</dbReference>
<dbReference type="PANTHER" id="PTHR12815">
    <property type="entry name" value="SORTING AND ASSEMBLY MACHINERY SAMM50 PROTEIN FAMILY MEMBER"/>
    <property type="match status" value="1"/>
</dbReference>
<dbReference type="Pfam" id="PF01103">
    <property type="entry name" value="Omp85"/>
    <property type="match status" value="1"/>
</dbReference>
<dbReference type="Pfam" id="PF07244">
    <property type="entry name" value="POTRA"/>
    <property type="match status" value="4"/>
</dbReference>
<dbReference type="PIRSF" id="PIRSF006076">
    <property type="entry name" value="OM_assembly_OMP85"/>
    <property type="match status" value="1"/>
</dbReference>
<dbReference type="SUPFAM" id="SSF56935">
    <property type="entry name" value="Porins"/>
    <property type="match status" value="1"/>
</dbReference>
<dbReference type="PROSITE" id="PS51779">
    <property type="entry name" value="POTRA"/>
    <property type="match status" value="5"/>
</dbReference>
<evidence type="ECO:0000255" key="1">
    <source>
        <dbReference type="HAMAP-Rule" id="MF_01430"/>
    </source>
</evidence>
<evidence type="ECO:0000255" key="2">
    <source>
        <dbReference type="PROSITE-ProRule" id="PRU01115"/>
    </source>
</evidence>
<protein>
    <recommendedName>
        <fullName evidence="1">Outer membrane protein assembly factor BamA</fullName>
    </recommendedName>
</protein>
<keyword id="KW-0998">Cell outer membrane</keyword>
<keyword id="KW-0472">Membrane</keyword>
<keyword id="KW-0677">Repeat</keyword>
<keyword id="KW-0732">Signal</keyword>
<keyword id="KW-0812">Transmembrane</keyword>
<keyword id="KW-1134">Transmembrane beta strand</keyword>
<sequence>MAMKKLLIASLLLSSATVYGADGFVVKDIHFEGLQRVAVGAALLSMPIRVGDTATDEDIGNTIRALFATGNFEDVRVLRDGDSVVVQVKERPTIASITFSGNKAVKEEMLKQNLDAQGVRVGEALDRTTISNIEKGLEDFYYSAGKYSTTVKAVVTPLPRNRVDLKLVFTEGVSAKIQQINIVGNHAFTTDELISRFQLRDEVPWWNVVGDRKYQKQKLAGDLETLRSFYLDRGYARFNIDSTQVSLTPDKKGIYITLNITEGAQYKLSGTVVNGNMAGHSAEIEQLAKVHPGELYNGAKVTKMENDIKQLLGRYGYAYPRVATQQEINDADKTVKLHISVDAGNRFYVRHVRFEGNDITKDSVLRREMRQMEGAWLGSNLVDQGKERLNRLGYFETVDTETQRVPGSPDQVDVVYKVKERNTGSINVGVGFGTESGVSFQFGIQQDNWLGTGNSVGFSGTKNDYQTYAELSMTDPYFTVDGVSLGGKIFYNDFSADDADLSDYDLRRYGVGTTLGFPISENHSLNFGLDYVHDDLTNMQPQVTMWRYLDSVGINPKVVTTNKADSDADFSADDFFLSMGWSYNNLDRGYFPTAGSRASLTGKVTVPGSDNEYYKITFDASHYIPLSESGNWVLMGRARAGYADGLGGKNVPFYDNFYAGGSNTVRGFRSNTIGPKAAYYKCNSGNTRYSDCPVDKSSDAVGGNAMAIASAELIMPTPFLSEKYANSVRTSLFVDGGTVWDTSWQNTSATRAAGIPDYSDPGNIRISSGIALQWMSPLGPLVFSYAQPVKKYDGDKSEQFQFNIGKTW</sequence>
<accession>Q2NRL5</accession>
<organism>
    <name type="scientific">Sodalis glossinidius (strain morsitans)</name>
    <dbReference type="NCBI Taxonomy" id="343509"/>
    <lineage>
        <taxon>Bacteria</taxon>
        <taxon>Pseudomonadati</taxon>
        <taxon>Pseudomonadota</taxon>
        <taxon>Gammaproteobacteria</taxon>
        <taxon>Enterobacterales</taxon>
        <taxon>Bruguierivoracaceae</taxon>
        <taxon>Sodalis</taxon>
    </lineage>
</organism>
<comment type="function">
    <text evidence="1">Part of the outer membrane protein assembly complex, which is involved in assembly and insertion of beta-barrel proteins into the outer membrane. Constitutes, with BamD, the core component of the assembly machinery.</text>
</comment>
<comment type="subunit">
    <text evidence="1">Part of the Bam complex, which is composed of the outer membrane protein BamA, and four lipoproteins BamB, BamC, BamD and BamE.</text>
</comment>
<comment type="subcellular location">
    <subcellularLocation>
        <location evidence="1">Cell outer membrane</location>
    </subcellularLocation>
</comment>
<comment type="similarity">
    <text evidence="1">Belongs to the BamA family.</text>
</comment>
<gene>
    <name evidence="1" type="primary">bamA</name>
    <name type="synonym">yaeT</name>
    <name type="ordered locus">SG1935</name>
</gene>
<proteinExistence type="inferred from homology"/>
<feature type="signal peptide" evidence="1">
    <location>
        <begin position="1"/>
        <end position="20"/>
    </location>
</feature>
<feature type="chain" id="PRO_1000024392" description="Outer membrane protein assembly factor BamA">
    <location>
        <begin position="21"/>
        <end position="808"/>
    </location>
</feature>
<feature type="domain" description="POTRA 1" evidence="2">
    <location>
        <begin position="24"/>
        <end position="91"/>
    </location>
</feature>
<feature type="domain" description="POTRA 2" evidence="2">
    <location>
        <begin position="92"/>
        <end position="172"/>
    </location>
</feature>
<feature type="domain" description="POTRA 3" evidence="2">
    <location>
        <begin position="175"/>
        <end position="263"/>
    </location>
</feature>
<feature type="domain" description="POTRA 4" evidence="2">
    <location>
        <begin position="266"/>
        <end position="344"/>
    </location>
</feature>
<feature type="domain" description="POTRA 5" evidence="2">
    <location>
        <begin position="347"/>
        <end position="421"/>
    </location>
</feature>